<organism>
    <name type="scientific">Campylobacter fetus subsp. fetus (strain 82-40)</name>
    <dbReference type="NCBI Taxonomy" id="360106"/>
    <lineage>
        <taxon>Bacteria</taxon>
        <taxon>Pseudomonadati</taxon>
        <taxon>Campylobacterota</taxon>
        <taxon>Epsilonproteobacteria</taxon>
        <taxon>Campylobacterales</taxon>
        <taxon>Campylobacteraceae</taxon>
        <taxon>Campylobacter</taxon>
    </lineage>
</organism>
<accession>A0RQJ2</accession>
<gene>
    <name evidence="1" type="primary">rpmG</name>
    <name type="ordered locus">CFF8240_1324</name>
</gene>
<protein>
    <recommendedName>
        <fullName evidence="1">Large ribosomal subunit protein bL33</fullName>
    </recommendedName>
    <alternativeName>
        <fullName evidence="2">50S ribosomal protein L33</fullName>
    </alternativeName>
</protein>
<comment type="similarity">
    <text evidence="1">Belongs to the bacterial ribosomal protein bL33 family.</text>
</comment>
<feature type="chain" id="PRO_0000356415" description="Large ribosomal subunit protein bL33">
    <location>
        <begin position="1"/>
        <end position="55"/>
    </location>
</feature>
<reference key="1">
    <citation type="submission" date="2006-11" db="EMBL/GenBank/DDBJ databases">
        <title>Sequence of Campylobacter fetus subsp. fetus 82-40.</title>
        <authorList>
            <person name="Fouts D.E."/>
            <person name="Nelson K.E."/>
        </authorList>
    </citation>
    <scope>NUCLEOTIDE SEQUENCE [LARGE SCALE GENOMIC DNA]</scope>
    <source>
        <strain>82-40</strain>
    </source>
</reference>
<keyword id="KW-0687">Ribonucleoprotein</keyword>
<keyword id="KW-0689">Ribosomal protein</keyword>
<name>RL33_CAMFF</name>
<dbReference type="EMBL" id="CP000487">
    <property type="protein sequence ID" value="ABK82614.1"/>
    <property type="molecule type" value="Genomic_DNA"/>
</dbReference>
<dbReference type="RefSeq" id="WP_010401324.1">
    <property type="nucleotide sequence ID" value="NC_008599.1"/>
</dbReference>
<dbReference type="SMR" id="A0RQJ2"/>
<dbReference type="GeneID" id="61065142"/>
<dbReference type="KEGG" id="cff:CFF8240_1324"/>
<dbReference type="eggNOG" id="COG0267">
    <property type="taxonomic scope" value="Bacteria"/>
</dbReference>
<dbReference type="HOGENOM" id="CLU_190949_0_2_7"/>
<dbReference type="Proteomes" id="UP000000760">
    <property type="component" value="Chromosome"/>
</dbReference>
<dbReference type="GO" id="GO:0005737">
    <property type="term" value="C:cytoplasm"/>
    <property type="evidence" value="ECO:0007669"/>
    <property type="project" value="UniProtKB-ARBA"/>
</dbReference>
<dbReference type="GO" id="GO:1990904">
    <property type="term" value="C:ribonucleoprotein complex"/>
    <property type="evidence" value="ECO:0007669"/>
    <property type="project" value="UniProtKB-KW"/>
</dbReference>
<dbReference type="GO" id="GO:0005840">
    <property type="term" value="C:ribosome"/>
    <property type="evidence" value="ECO:0007669"/>
    <property type="project" value="UniProtKB-KW"/>
</dbReference>
<dbReference type="GO" id="GO:0003735">
    <property type="term" value="F:structural constituent of ribosome"/>
    <property type="evidence" value="ECO:0007669"/>
    <property type="project" value="InterPro"/>
</dbReference>
<dbReference type="GO" id="GO:0006412">
    <property type="term" value="P:translation"/>
    <property type="evidence" value="ECO:0007669"/>
    <property type="project" value="UniProtKB-UniRule"/>
</dbReference>
<dbReference type="Gene3D" id="2.20.28.120">
    <property type="entry name" value="Ribosomal protein L33"/>
    <property type="match status" value="1"/>
</dbReference>
<dbReference type="HAMAP" id="MF_00294">
    <property type="entry name" value="Ribosomal_bL33"/>
    <property type="match status" value="1"/>
</dbReference>
<dbReference type="InterPro" id="IPR001705">
    <property type="entry name" value="Ribosomal_bL33"/>
</dbReference>
<dbReference type="InterPro" id="IPR018264">
    <property type="entry name" value="Ribosomal_bL33_CS"/>
</dbReference>
<dbReference type="InterPro" id="IPR038584">
    <property type="entry name" value="Ribosomal_bL33_sf"/>
</dbReference>
<dbReference type="InterPro" id="IPR011332">
    <property type="entry name" value="Ribosomal_zn-bd"/>
</dbReference>
<dbReference type="NCBIfam" id="NF001764">
    <property type="entry name" value="PRK00504.1"/>
    <property type="match status" value="1"/>
</dbReference>
<dbReference type="NCBIfam" id="NF001860">
    <property type="entry name" value="PRK00595.1"/>
    <property type="match status" value="1"/>
</dbReference>
<dbReference type="NCBIfam" id="TIGR01023">
    <property type="entry name" value="rpmG_bact"/>
    <property type="match status" value="1"/>
</dbReference>
<dbReference type="PANTHER" id="PTHR43168">
    <property type="entry name" value="50S RIBOSOMAL PROTEIN L33, CHLOROPLASTIC"/>
    <property type="match status" value="1"/>
</dbReference>
<dbReference type="PANTHER" id="PTHR43168:SF6">
    <property type="entry name" value="LARGE RIBOSOMAL SUBUNIT PROTEIN BL33A"/>
    <property type="match status" value="1"/>
</dbReference>
<dbReference type="Pfam" id="PF00471">
    <property type="entry name" value="Ribosomal_L33"/>
    <property type="match status" value="1"/>
</dbReference>
<dbReference type="SUPFAM" id="SSF57829">
    <property type="entry name" value="Zn-binding ribosomal proteins"/>
    <property type="match status" value="1"/>
</dbReference>
<dbReference type="PROSITE" id="PS00582">
    <property type="entry name" value="RIBOSOMAL_L33"/>
    <property type="match status" value="1"/>
</dbReference>
<proteinExistence type="inferred from homology"/>
<sequence>MASANRVKIGLKCAECNDINYTTTKNSKTTTEKLELKKYCPRLKKHTVHKEVKLK</sequence>
<evidence type="ECO:0000255" key="1">
    <source>
        <dbReference type="HAMAP-Rule" id="MF_00294"/>
    </source>
</evidence>
<evidence type="ECO:0000305" key="2"/>